<proteinExistence type="inferred from homology"/>
<evidence type="ECO:0000255" key="1">
    <source>
        <dbReference type="HAMAP-Rule" id="MF_00625"/>
    </source>
</evidence>
<evidence type="ECO:0000305" key="2"/>
<feature type="chain" id="PRO_0000127645" description="Selenide, water dikinase">
    <location>
        <begin position="1"/>
        <end position="349"/>
    </location>
</feature>
<feature type="active site" evidence="1">
    <location>
        <position position="19"/>
    </location>
</feature>
<feature type="binding site" description="in other chain" evidence="1">
    <location>
        <position position="22"/>
    </location>
    <ligand>
        <name>ATP</name>
        <dbReference type="ChEBI" id="CHEBI:30616"/>
        <note>ligand shared between dimeric partners</note>
    </ligand>
</feature>
<feature type="binding site" description="in other chain" evidence="1">
    <location>
        <begin position="50"/>
        <end position="52"/>
    </location>
    <ligand>
        <name>ATP</name>
        <dbReference type="ChEBI" id="CHEBI:30616"/>
        <note>ligand shared between dimeric partners</note>
    </ligand>
</feature>
<feature type="binding site" evidence="1">
    <location>
        <position position="53"/>
    </location>
    <ligand>
        <name>Mg(2+)</name>
        <dbReference type="ChEBI" id="CHEBI:18420"/>
    </ligand>
</feature>
<feature type="binding site" description="in other chain" evidence="1">
    <location>
        <position position="69"/>
    </location>
    <ligand>
        <name>ATP</name>
        <dbReference type="ChEBI" id="CHEBI:30616"/>
        <note>ligand shared between dimeric partners</note>
    </ligand>
</feature>
<feature type="binding site" description="in other chain" evidence="1">
    <location>
        <position position="92"/>
    </location>
    <ligand>
        <name>ATP</name>
        <dbReference type="ChEBI" id="CHEBI:30616"/>
        <note>ligand shared between dimeric partners</note>
    </ligand>
</feature>
<feature type="binding site" evidence="1">
    <location>
        <position position="92"/>
    </location>
    <ligand>
        <name>Mg(2+)</name>
        <dbReference type="ChEBI" id="CHEBI:18420"/>
    </ligand>
</feature>
<feature type="binding site" evidence="1">
    <location>
        <begin position="140"/>
        <end position="142"/>
    </location>
    <ligand>
        <name>ATP</name>
        <dbReference type="ChEBI" id="CHEBI:30616"/>
        <note>ligand shared between dimeric partners</note>
    </ligand>
</feature>
<feature type="binding site" evidence="1">
    <location>
        <position position="246"/>
    </location>
    <ligand>
        <name>Mg(2+)</name>
        <dbReference type="ChEBI" id="CHEBI:18420"/>
    </ligand>
</feature>
<feature type="site" description="Important for catalytic activity" evidence="1">
    <location>
        <position position="22"/>
    </location>
</feature>
<feature type="non-standard amino acid" description="Selenocysteine" evidence="2">
    <location>
        <position position="19"/>
    </location>
</feature>
<comment type="function">
    <text evidence="1">Synthesizes selenophosphate from selenide and ATP.</text>
</comment>
<comment type="catalytic activity">
    <reaction evidence="1">
        <text>hydrogenselenide + ATP + H2O = selenophosphate + AMP + phosphate + 2 H(+)</text>
        <dbReference type="Rhea" id="RHEA:18737"/>
        <dbReference type="ChEBI" id="CHEBI:15377"/>
        <dbReference type="ChEBI" id="CHEBI:15378"/>
        <dbReference type="ChEBI" id="CHEBI:16144"/>
        <dbReference type="ChEBI" id="CHEBI:29317"/>
        <dbReference type="ChEBI" id="CHEBI:30616"/>
        <dbReference type="ChEBI" id="CHEBI:43474"/>
        <dbReference type="ChEBI" id="CHEBI:456215"/>
        <dbReference type="EC" id="2.7.9.3"/>
    </reaction>
</comment>
<comment type="cofactor">
    <cofactor evidence="1">
        <name>Mg(2+)</name>
        <dbReference type="ChEBI" id="CHEBI:18420"/>
    </cofactor>
    <text evidence="1">Binds 1 Mg(2+) ion per monomer.</text>
</comment>
<comment type="subunit">
    <text evidence="1">Homodimer.</text>
</comment>
<comment type="similarity">
    <text evidence="1 2">Belongs to the selenophosphate synthase 1 family. Class I subfamily.</text>
</comment>
<reference key="1">
    <citation type="journal article" date="1996" name="Science">
        <title>Complete genome sequence of the methanogenic archaeon, Methanococcus jannaschii.</title>
        <authorList>
            <person name="Bult C.J."/>
            <person name="White O."/>
            <person name="Olsen G.J."/>
            <person name="Zhou L."/>
            <person name="Fleischmann R.D."/>
            <person name="Sutton G.G."/>
            <person name="Blake J.A."/>
            <person name="FitzGerald L.M."/>
            <person name="Clayton R.A."/>
            <person name="Gocayne J.D."/>
            <person name="Kerlavage A.R."/>
            <person name="Dougherty B.A."/>
            <person name="Tomb J.-F."/>
            <person name="Adams M.D."/>
            <person name="Reich C.I."/>
            <person name="Overbeek R."/>
            <person name="Kirkness E.F."/>
            <person name="Weinstock K.G."/>
            <person name="Merrick J.M."/>
            <person name="Glodek A."/>
            <person name="Scott J.L."/>
            <person name="Geoghagen N.S.M."/>
            <person name="Weidman J.F."/>
            <person name="Fuhrmann J.L."/>
            <person name="Nguyen D."/>
            <person name="Utterback T.R."/>
            <person name="Kelley J.M."/>
            <person name="Peterson J.D."/>
            <person name="Sadow P.W."/>
            <person name="Hanna M.C."/>
            <person name="Cotton M.D."/>
            <person name="Roberts K.M."/>
            <person name="Hurst M.A."/>
            <person name="Kaine B.P."/>
            <person name="Borodovsky M."/>
            <person name="Klenk H.-P."/>
            <person name="Fraser C.M."/>
            <person name="Smith H.O."/>
            <person name="Woese C.R."/>
            <person name="Venter J.C."/>
        </authorList>
    </citation>
    <scope>NUCLEOTIDE SEQUENCE [LARGE SCALE GENOMIC DNA]</scope>
    <source>
        <strain>ATCC 43067 / DSM 2661 / JAL-1 / JCM 10045 / NBRC 100440</strain>
    </source>
</reference>
<reference key="2">
    <citation type="journal article" date="1997" name="J. Mol. Biol.">
        <title>Selenoprotein synthesis in archaea: identification of an mRNA element of Methanococcus jannaschii probably directing selenocysteine insertion.</title>
        <authorList>
            <person name="Wilting R."/>
            <person name="Schorling S."/>
            <person name="Persson B.C."/>
            <person name="Boeck A."/>
        </authorList>
    </citation>
    <scope>PROBABLE SELENOCYSTEINE AT SEC-19</scope>
</reference>
<name>SELD_METJA</name>
<accession>P60819</accession>
<protein>
    <recommendedName>
        <fullName evidence="1">Selenide, water dikinase</fullName>
        <ecNumber evidence="1">2.7.9.3</ecNumber>
    </recommendedName>
    <alternativeName>
        <fullName evidence="1">Selenium donor protein</fullName>
    </alternativeName>
    <alternativeName>
        <fullName evidence="1">Selenophosphate synthase</fullName>
    </alternativeName>
</protein>
<sequence>MERGNEKIKLTELVKLHGUACKLPSTELEFLVKGIVTDDDLLDKNILVGLGDDASIIKRNGLVIAKTVDVFTPIVDDPYIQGKIAACNSTSDIYAMGLLDIVGVLAIVGIPEKLPIHVVREMLKGFQDFCRENKTTIVGGHTILNPWPLIGGAVTGVGREEEVLTKAGVKVGDVLILTKPLGTQTAMALSRIPEEFKDLISITEEERDYIINKAIEIMTTSNRYALKALRKAEERVGDKIANALTDITGFGILGHSNEMAKNSNVLIEINLLPCIKRTPELSRLFGHALLDGYGAETAGGLLISAKEEYKDNLIDELEKAKCYAFEVGRVVKKGEGKAVLSKDVKVIEI</sequence>
<gene>
    <name evidence="1" type="primary">selD</name>
    <name type="ordered locus">MJ1591</name>
</gene>
<dbReference type="EC" id="2.7.9.3" evidence="1"/>
<dbReference type="EMBL" id="L77117">
    <property type="status" value="NOT_ANNOTATED_CDS"/>
    <property type="molecule type" value="Genomic_DNA"/>
</dbReference>
<dbReference type="RefSeq" id="WP_083774555.1">
    <property type="nucleotide sequence ID" value="NC_000909.1"/>
</dbReference>
<dbReference type="FunCoup" id="P60819">
    <property type="interactions" value="76"/>
</dbReference>
<dbReference type="GeneID" id="1452600"/>
<dbReference type="InParanoid" id="P60819"/>
<dbReference type="OrthoDB" id="59705at2157"/>
<dbReference type="PhylomeDB" id="P60819"/>
<dbReference type="Proteomes" id="UP000000805">
    <property type="component" value="Chromosome"/>
</dbReference>
<dbReference type="GO" id="GO:0005737">
    <property type="term" value="C:cytoplasm"/>
    <property type="evidence" value="ECO:0000318"/>
    <property type="project" value="GO_Central"/>
</dbReference>
<dbReference type="GO" id="GO:0005524">
    <property type="term" value="F:ATP binding"/>
    <property type="evidence" value="ECO:0007669"/>
    <property type="project" value="UniProtKB-UniRule"/>
</dbReference>
<dbReference type="GO" id="GO:0000287">
    <property type="term" value="F:magnesium ion binding"/>
    <property type="evidence" value="ECO:0007669"/>
    <property type="project" value="UniProtKB-UniRule"/>
</dbReference>
<dbReference type="GO" id="GO:0004756">
    <property type="term" value="F:selenide, water dikinase activity"/>
    <property type="evidence" value="ECO:0000318"/>
    <property type="project" value="GO_Central"/>
</dbReference>
<dbReference type="GO" id="GO:0016260">
    <property type="term" value="P:selenocysteine biosynthetic process"/>
    <property type="evidence" value="ECO:0000318"/>
    <property type="project" value="GO_Central"/>
</dbReference>
<dbReference type="CDD" id="cd02195">
    <property type="entry name" value="SelD"/>
    <property type="match status" value="1"/>
</dbReference>
<dbReference type="FunFam" id="3.30.1330.10:FF:000003">
    <property type="entry name" value="Selenide, water dikinase"/>
    <property type="match status" value="1"/>
</dbReference>
<dbReference type="Gene3D" id="3.90.650.10">
    <property type="entry name" value="PurM-like C-terminal domain"/>
    <property type="match status" value="1"/>
</dbReference>
<dbReference type="Gene3D" id="3.30.1330.10">
    <property type="entry name" value="PurM-like, N-terminal domain"/>
    <property type="match status" value="1"/>
</dbReference>
<dbReference type="HAMAP" id="MF_00625">
    <property type="entry name" value="SelD"/>
    <property type="match status" value="1"/>
</dbReference>
<dbReference type="InterPro" id="IPR010918">
    <property type="entry name" value="PurM-like_C_dom"/>
</dbReference>
<dbReference type="InterPro" id="IPR036676">
    <property type="entry name" value="PurM-like_C_sf"/>
</dbReference>
<dbReference type="InterPro" id="IPR016188">
    <property type="entry name" value="PurM-like_N"/>
</dbReference>
<dbReference type="InterPro" id="IPR036921">
    <property type="entry name" value="PurM-like_N_sf"/>
</dbReference>
<dbReference type="InterPro" id="IPR023061">
    <property type="entry name" value="SelD_I"/>
</dbReference>
<dbReference type="InterPro" id="IPR004536">
    <property type="entry name" value="SPS/SelD"/>
</dbReference>
<dbReference type="NCBIfam" id="NF010705">
    <property type="entry name" value="PRK14105.1"/>
    <property type="match status" value="1"/>
</dbReference>
<dbReference type="NCBIfam" id="TIGR00476">
    <property type="entry name" value="selD"/>
    <property type="match status" value="1"/>
</dbReference>
<dbReference type="PANTHER" id="PTHR10256:SF0">
    <property type="entry name" value="INACTIVE SELENIDE, WATER DIKINASE-LIKE PROTEIN-RELATED"/>
    <property type="match status" value="1"/>
</dbReference>
<dbReference type="PANTHER" id="PTHR10256">
    <property type="entry name" value="SELENIDE, WATER DIKINASE"/>
    <property type="match status" value="1"/>
</dbReference>
<dbReference type="Pfam" id="PF00586">
    <property type="entry name" value="AIRS"/>
    <property type="match status" value="1"/>
</dbReference>
<dbReference type="Pfam" id="PF02769">
    <property type="entry name" value="AIRS_C"/>
    <property type="match status" value="1"/>
</dbReference>
<dbReference type="PIRSF" id="PIRSF036407">
    <property type="entry name" value="Selenphspht_syn"/>
    <property type="match status" value="1"/>
</dbReference>
<dbReference type="SUPFAM" id="SSF56042">
    <property type="entry name" value="PurM C-terminal domain-like"/>
    <property type="match status" value="1"/>
</dbReference>
<dbReference type="SUPFAM" id="SSF55326">
    <property type="entry name" value="PurM N-terminal domain-like"/>
    <property type="match status" value="1"/>
</dbReference>
<organism>
    <name type="scientific">Methanocaldococcus jannaschii (strain ATCC 43067 / DSM 2661 / JAL-1 / JCM 10045 / NBRC 100440)</name>
    <name type="common">Methanococcus jannaschii</name>
    <dbReference type="NCBI Taxonomy" id="243232"/>
    <lineage>
        <taxon>Archaea</taxon>
        <taxon>Methanobacteriati</taxon>
        <taxon>Methanobacteriota</taxon>
        <taxon>Methanomada group</taxon>
        <taxon>Methanococci</taxon>
        <taxon>Methanococcales</taxon>
        <taxon>Methanocaldococcaceae</taxon>
        <taxon>Methanocaldococcus</taxon>
    </lineage>
</organism>
<keyword id="KW-0067">ATP-binding</keyword>
<keyword id="KW-0418">Kinase</keyword>
<keyword id="KW-0460">Magnesium</keyword>
<keyword id="KW-0479">Metal-binding</keyword>
<keyword id="KW-0547">Nucleotide-binding</keyword>
<keyword id="KW-1185">Reference proteome</keyword>
<keyword id="KW-0711">Selenium</keyword>
<keyword id="KW-0712">Selenocysteine</keyword>
<keyword id="KW-0808">Transferase</keyword>